<accession>Q5ZYM4</accession>
<sequence length="144" mass="15344">MNLNTLSPDPGSRPSRRRVGRGIGSGLGKTCGKGHKGQKSRAGGYHKINFEGGQMPIQRRLPKMGFKSRVGRTIDEVSLGELAKLNDEVIDLVALRKAGLINNSIKDVKVILSGELTAAIKLKGLRVTKGARSAIESLGGSIEE</sequence>
<protein>
    <recommendedName>
        <fullName evidence="1">Large ribosomal subunit protein uL15</fullName>
    </recommendedName>
    <alternativeName>
        <fullName evidence="3">50S ribosomal protein L15</fullName>
    </alternativeName>
</protein>
<reference key="1">
    <citation type="journal article" date="2004" name="Science">
        <title>The genomic sequence of the accidental pathogen Legionella pneumophila.</title>
        <authorList>
            <person name="Chien M."/>
            <person name="Morozova I."/>
            <person name="Shi S."/>
            <person name="Sheng H."/>
            <person name="Chen J."/>
            <person name="Gomez S.M."/>
            <person name="Asamani G."/>
            <person name="Hill K."/>
            <person name="Nuara J."/>
            <person name="Feder M."/>
            <person name="Rineer J."/>
            <person name="Greenberg J.J."/>
            <person name="Steshenko V."/>
            <person name="Park S.H."/>
            <person name="Zhao B."/>
            <person name="Teplitskaya E."/>
            <person name="Edwards J.R."/>
            <person name="Pampou S."/>
            <person name="Georghiou A."/>
            <person name="Chou I.-C."/>
            <person name="Iannuccilli W."/>
            <person name="Ulz M.E."/>
            <person name="Kim D.H."/>
            <person name="Geringer-Sameth A."/>
            <person name="Goldsberry C."/>
            <person name="Morozov P."/>
            <person name="Fischer S.G."/>
            <person name="Segal G."/>
            <person name="Qu X."/>
            <person name="Rzhetsky A."/>
            <person name="Zhang P."/>
            <person name="Cayanis E."/>
            <person name="De Jong P.J."/>
            <person name="Ju J."/>
            <person name="Kalachikov S."/>
            <person name="Shuman H.A."/>
            <person name="Russo J.J."/>
        </authorList>
    </citation>
    <scope>NUCLEOTIDE SEQUENCE [LARGE SCALE GENOMIC DNA]</scope>
    <source>
        <strain>Philadelphia 1 / ATCC 33152 / DSM 7513</strain>
    </source>
</reference>
<comment type="function">
    <text evidence="1">Binds to the 23S rRNA.</text>
</comment>
<comment type="subunit">
    <text evidence="1">Part of the 50S ribosomal subunit.</text>
</comment>
<comment type="similarity">
    <text evidence="1">Belongs to the universal ribosomal protein uL15 family.</text>
</comment>
<dbReference type="EMBL" id="AE017354">
    <property type="protein sequence ID" value="AAU26445.1"/>
    <property type="molecule type" value="Genomic_DNA"/>
</dbReference>
<dbReference type="RefSeq" id="WP_010946097.1">
    <property type="nucleotide sequence ID" value="NC_002942.5"/>
</dbReference>
<dbReference type="RefSeq" id="YP_094392.1">
    <property type="nucleotide sequence ID" value="NC_002942.5"/>
</dbReference>
<dbReference type="SMR" id="Q5ZYM4"/>
<dbReference type="STRING" id="272624.lpg0348"/>
<dbReference type="PaxDb" id="272624-lpg0348"/>
<dbReference type="GeneID" id="57034351"/>
<dbReference type="KEGG" id="lpn:lpg0348"/>
<dbReference type="PATRIC" id="fig|272624.6.peg.355"/>
<dbReference type="eggNOG" id="COG0200">
    <property type="taxonomic scope" value="Bacteria"/>
</dbReference>
<dbReference type="HOGENOM" id="CLU_055188_4_2_6"/>
<dbReference type="OrthoDB" id="9810293at2"/>
<dbReference type="Proteomes" id="UP000000609">
    <property type="component" value="Chromosome"/>
</dbReference>
<dbReference type="GO" id="GO:0022625">
    <property type="term" value="C:cytosolic large ribosomal subunit"/>
    <property type="evidence" value="ECO:0007669"/>
    <property type="project" value="TreeGrafter"/>
</dbReference>
<dbReference type="GO" id="GO:0019843">
    <property type="term" value="F:rRNA binding"/>
    <property type="evidence" value="ECO:0007669"/>
    <property type="project" value="UniProtKB-UniRule"/>
</dbReference>
<dbReference type="GO" id="GO:0003735">
    <property type="term" value="F:structural constituent of ribosome"/>
    <property type="evidence" value="ECO:0007669"/>
    <property type="project" value="InterPro"/>
</dbReference>
<dbReference type="GO" id="GO:0006412">
    <property type="term" value="P:translation"/>
    <property type="evidence" value="ECO:0007669"/>
    <property type="project" value="UniProtKB-UniRule"/>
</dbReference>
<dbReference type="Gene3D" id="3.100.10.10">
    <property type="match status" value="1"/>
</dbReference>
<dbReference type="HAMAP" id="MF_01341">
    <property type="entry name" value="Ribosomal_uL15"/>
    <property type="match status" value="1"/>
</dbReference>
<dbReference type="InterPro" id="IPR030878">
    <property type="entry name" value="Ribosomal_uL15"/>
</dbReference>
<dbReference type="InterPro" id="IPR021131">
    <property type="entry name" value="Ribosomal_uL15/eL18"/>
</dbReference>
<dbReference type="InterPro" id="IPR036227">
    <property type="entry name" value="Ribosomal_uL15/eL18_sf"/>
</dbReference>
<dbReference type="InterPro" id="IPR005749">
    <property type="entry name" value="Ribosomal_uL15_bac-type"/>
</dbReference>
<dbReference type="InterPro" id="IPR001196">
    <property type="entry name" value="Ribosomal_uL15_CS"/>
</dbReference>
<dbReference type="NCBIfam" id="TIGR01071">
    <property type="entry name" value="rplO_bact"/>
    <property type="match status" value="1"/>
</dbReference>
<dbReference type="PANTHER" id="PTHR12934">
    <property type="entry name" value="50S RIBOSOMAL PROTEIN L15"/>
    <property type="match status" value="1"/>
</dbReference>
<dbReference type="PANTHER" id="PTHR12934:SF11">
    <property type="entry name" value="LARGE RIBOSOMAL SUBUNIT PROTEIN UL15M"/>
    <property type="match status" value="1"/>
</dbReference>
<dbReference type="Pfam" id="PF00828">
    <property type="entry name" value="Ribosomal_L27A"/>
    <property type="match status" value="1"/>
</dbReference>
<dbReference type="SUPFAM" id="SSF52080">
    <property type="entry name" value="Ribosomal proteins L15p and L18e"/>
    <property type="match status" value="1"/>
</dbReference>
<dbReference type="PROSITE" id="PS00475">
    <property type="entry name" value="RIBOSOMAL_L15"/>
    <property type="match status" value="1"/>
</dbReference>
<proteinExistence type="inferred from homology"/>
<name>RL15_LEGPH</name>
<gene>
    <name evidence="1" type="primary">rplO</name>
    <name type="ordered locus">lpg0348</name>
</gene>
<organism>
    <name type="scientific">Legionella pneumophila subsp. pneumophila (strain Philadelphia 1 / ATCC 33152 / DSM 7513)</name>
    <dbReference type="NCBI Taxonomy" id="272624"/>
    <lineage>
        <taxon>Bacteria</taxon>
        <taxon>Pseudomonadati</taxon>
        <taxon>Pseudomonadota</taxon>
        <taxon>Gammaproteobacteria</taxon>
        <taxon>Legionellales</taxon>
        <taxon>Legionellaceae</taxon>
        <taxon>Legionella</taxon>
    </lineage>
</organism>
<keyword id="KW-1185">Reference proteome</keyword>
<keyword id="KW-0687">Ribonucleoprotein</keyword>
<keyword id="KW-0689">Ribosomal protein</keyword>
<keyword id="KW-0694">RNA-binding</keyword>
<keyword id="KW-0699">rRNA-binding</keyword>
<feature type="chain" id="PRO_0000104742" description="Large ribosomal subunit protein uL15">
    <location>
        <begin position="1"/>
        <end position="144"/>
    </location>
</feature>
<feature type="region of interest" description="Disordered" evidence="2">
    <location>
        <begin position="1"/>
        <end position="45"/>
    </location>
</feature>
<feature type="compositionally biased region" description="Gly residues" evidence="2">
    <location>
        <begin position="21"/>
        <end position="31"/>
    </location>
</feature>
<evidence type="ECO:0000255" key="1">
    <source>
        <dbReference type="HAMAP-Rule" id="MF_01341"/>
    </source>
</evidence>
<evidence type="ECO:0000256" key="2">
    <source>
        <dbReference type="SAM" id="MobiDB-lite"/>
    </source>
</evidence>
<evidence type="ECO:0000305" key="3"/>